<feature type="chain" id="PRO_0000165859" description="Chloramphenicol acetyltransferase">
    <location>
        <begin position="1"/>
        <end position="219"/>
    </location>
</feature>
<feature type="active site" description="Proton acceptor" evidence="1">
    <location>
        <position position="190"/>
    </location>
</feature>
<sequence length="219" mass="26144">MNFNLIDINHWSRKPYFEHYLNNVKCTYSMTANIEITDLLYEIKLKNIKFYPTLIYMIATVVNNHKEFRICFDHKGSLGYWDSMNPSYTIFHKENETFSSIWTEYNKSFLRFYSDYLDDIKNYGNIMKFTPKSNEPDNTFSVSSIPWVSFTGFNLNVYNEGTYLIPIFTAGKYFKQENKIFIPISIQVHHAICDGYHASRFINEMQELAFSFQEWLENK</sequence>
<reference key="1">
    <citation type="journal article" date="1992" name="Antimicrob. Agents Chemother.">
        <title>Comparative sequence analysis of the catB gene from Clostridium butyricum.</title>
        <authorList>
            <person name="Huggins A.S."/>
            <person name="Bannam T.L."/>
            <person name="Rood J.I."/>
        </authorList>
    </citation>
    <scope>NUCLEOTIDE SEQUENCE [GENOMIC DNA]</scope>
</reference>
<comment type="function">
    <text>This enzyme is an effector of chloramphenicol resistance in bacteria.</text>
</comment>
<comment type="catalytic activity">
    <reaction evidence="1">
        <text>chloramphenicol + acetyl-CoA = chloramphenicol 3-acetate + CoA</text>
        <dbReference type="Rhea" id="RHEA:18421"/>
        <dbReference type="ChEBI" id="CHEBI:16730"/>
        <dbReference type="ChEBI" id="CHEBI:17698"/>
        <dbReference type="ChEBI" id="CHEBI:57287"/>
        <dbReference type="ChEBI" id="CHEBI:57288"/>
        <dbReference type="EC" id="2.3.1.28"/>
    </reaction>
</comment>
<comment type="subunit">
    <text>Homotrimer.</text>
</comment>
<comment type="similarity">
    <text evidence="2">Belongs to the chloramphenicol acetyltransferase family.</text>
</comment>
<organism>
    <name type="scientific">Clostridium butyricum</name>
    <dbReference type="NCBI Taxonomy" id="1492"/>
    <lineage>
        <taxon>Bacteria</taxon>
        <taxon>Bacillati</taxon>
        <taxon>Bacillota</taxon>
        <taxon>Clostridia</taxon>
        <taxon>Eubacteriales</taxon>
        <taxon>Clostridiaceae</taxon>
        <taxon>Clostridium</taxon>
    </lineage>
</organism>
<accession>Q02736</accession>
<dbReference type="EC" id="2.3.1.28"/>
<dbReference type="EMBL" id="M93113">
    <property type="protein sequence ID" value="AAA73865.1"/>
    <property type="molecule type" value="Genomic_DNA"/>
</dbReference>
<dbReference type="PIR" id="A48907">
    <property type="entry name" value="A48907"/>
</dbReference>
<dbReference type="RefSeq" id="WP_063843219.1">
    <property type="nucleotide sequence ID" value="NG_047589.1"/>
</dbReference>
<dbReference type="SMR" id="Q02736"/>
<dbReference type="CARD" id="ARO:3002674">
    <property type="molecule name" value="Cbut_catB"/>
    <property type="mechanism identifier" value="ARO:0001004"/>
    <property type="mechanism name" value="antibiotic inactivation"/>
</dbReference>
<dbReference type="KEGG" id="ag:AAA73865"/>
<dbReference type="GO" id="GO:0008811">
    <property type="term" value="F:chloramphenicol O-acetyltransferase activity"/>
    <property type="evidence" value="ECO:0007669"/>
    <property type="project" value="UniProtKB-EC"/>
</dbReference>
<dbReference type="GO" id="GO:0046677">
    <property type="term" value="P:response to antibiotic"/>
    <property type="evidence" value="ECO:0007669"/>
    <property type="project" value="UniProtKB-KW"/>
</dbReference>
<dbReference type="Gene3D" id="3.30.559.10">
    <property type="entry name" value="Chloramphenicol acetyltransferase-like domain"/>
    <property type="match status" value="1"/>
</dbReference>
<dbReference type="InterPro" id="IPR023213">
    <property type="entry name" value="CAT-like_dom_sf"/>
</dbReference>
<dbReference type="InterPro" id="IPR018372">
    <property type="entry name" value="Chloramphenicol_AcTrfase_AS"/>
</dbReference>
<dbReference type="InterPro" id="IPR001707">
    <property type="entry name" value="Cmp_AcTrfase"/>
</dbReference>
<dbReference type="NCBIfam" id="NF000491">
    <property type="entry name" value="chloram_CatA"/>
    <property type="match status" value="1"/>
</dbReference>
<dbReference type="PANTHER" id="PTHR38474:SF2">
    <property type="entry name" value="CHLORAMPHENICOL ACETYLTRANSFERASE"/>
    <property type="match status" value="1"/>
</dbReference>
<dbReference type="PANTHER" id="PTHR38474">
    <property type="entry name" value="SLR0299 PROTEIN"/>
    <property type="match status" value="1"/>
</dbReference>
<dbReference type="Pfam" id="PF00302">
    <property type="entry name" value="CAT"/>
    <property type="match status" value="1"/>
</dbReference>
<dbReference type="PIRSF" id="PIRSF000440">
    <property type="entry name" value="CAT"/>
    <property type="match status" value="1"/>
</dbReference>
<dbReference type="SMART" id="SM01059">
    <property type="entry name" value="CAT"/>
    <property type="match status" value="1"/>
</dbReference>
<dbReference type="SUPFAM" id="SSF52777">
    <property type="entry name" value="CoA-dependent acyltransferases"/>
    <property type="match status" value="1"/>
</dbReference>
<dbReference type="PROSITE" id="PS00100">
    <property type="entry name" value="CAT"/>
    <property type="match status" value="1"/>
</dbReference>
<name>CAT_CLOBU</name>
<gene>
    <name type="primary">catB</name>
</gene>
<proteinExistence type="inferred from homology"/>
<keyword id="KW-0012">Acyltransferase</keyword>
<keyword id="KW-0046">Antibiotic resistance</keyword>
<keyword id="KW-0808">Transferase</keyword>
<evidence type="ECO:0000255" key="1">
    <source>
        <dbReference type="PROSITE-ProRule" id="PRU10021"/>
    </source>
</evidence>
<evidence type="ECO:0000305" key="2"/>
<protein>
    <recommendedName>
        <fullName>Chloramphenicol acetyltransferase</fullName>
        <shortName>CAT</shortName>
        <ecNumber>2.3.1.28</ecNumber>
    </recommendedName>
</protein>